<name>GPDA_MYXXD</name>
<gene>
    <name evidence="1" type="primary">gpsA</name>
    <name type="ordered locus">MXAN_1354</name>
</gene>
<protein>
    <recommendedName>
        <fullName evidence="1">Glycerol-3-phosphate dehydrogenase [NAD(P)+]</fullName>
        <ecNumber evidence="1">1.1.1.94</ecNumber>
    </recommendedName>
    <alternativeName>
        <fullName evidence="1">NAD(P)(+)-dependent glycerol-3-phosphate dehydrogenase</fullName>
    </alternativeName>
    <alternativeName>
        <fullName evidence="1">NAD(P)H-dependent dihydroxyacetone-phosphate reductase</fullName>
    </alternativeName>
</protein>
<evidence type="ECO:0000255" key="1">
    <source>
        <dbReference type="HAMAP-Rule" id="MF_00394"/>
    </source>
</evidence>
<feature type="chain" id="PRO_0000255333" description="Glycerol-3-phosphate dehydrogenase [NAD(P)+]">
    <location>
        <begin position="1"/>
        <end position="335"/>
    </location>
</feature>
<feature type="active site" description="Proton acceptor" evidence="1">
    <location>
        <position position="191"/>
    </location>
</feature>
<feature type="binding site" evidence="1">
    <location>
        <position position="10"/>
    </location>
    <ligand>
        <name>NADPH</name>
        <dbReference type="ChEBI" id="CHEBI:57783"/>
    </ligand>
</feature>
<feature type="binding site" evidence="1">
    <location>
        <position position="11"/>
    </location>
    <ligand>
        <name>NADPH</name>
        <dbReference type="ChEBI" id="CHEBI:57783"/>
    </ligand>
</feature>
<feature type="binding site" evidence="1">
    <location>
        <position position="31"/>
    </location>
    <ligand>
        <name>NADPH</name>
        <dbReference type="ChEBI" id="CHEBI:57783"/>
    </ligand>
</feature>
<feature type="binding site" evidence="1">
    <location>
        <position position="105"/>
    </location>
    <ligand>
        <name>NADPH</name>
        <dbReference type="ChEBI" id="CHEBI:57783"/>
    </ligand>
</feature>
<feature type="binding site" evidence="1">
    <location>
        <position position="105"/>
    </location>
    <ligand>
        <name>sn-glycerol 3-phosphate</name>
        <dbReference type="ChEBI" id="CHEBI:57597"/>
    </ligand>
</feature>
<feature type="binding site" evidence="1">
    <location>
        <position position="136"/>
    </location>
    <ligand>
        <name>sn-glycerol 3-phosphate</name>
        <dbReference type="ChEBI" id="CHEBI:57597"/>
    </ligand>
</feature>
<feature type="binding site" evidence="1">
    <location>
        <position position="138"/>
    </location>
    <ligand>
        <name>sn-glycerol 3-phosphate</name>
        <dbReference type="ChEBI" id="CHEBI:57597"/>
    </ligand>
</feature>
<feature type="binding site" evidence="1">
    <location>
        <position position="140"/>
    </location>
    <ligand>
        <name>NADPH</name>
        <dbReference type="ChEBI" id="CHEBI:57783"/>
    </ligand>
</feature>
<feature type="binding site" evidence="1">
    <location>
        <position position="191"/>
    </location>
    <ligand>
        <name>sn-glycerol 3-phosphate</name>
        <dbReference type="ChEBI" id="CHEBI:57597"/>
    </ligand>
</feature>
<feature type="binding site" evidence="1">
    <location>
        <position position="244"/>
    </location>
    <ligand>
        <name>sn-glycerol 3-phosphate</name>
        <dbReference type="ChEBI" id="CHEBI:57597"/>
    </ligand>
</feature>
<feature type="binding site" evidence="1">
    <location>
        <position position="254"/>
    </location>
    <ligand>
        <name>sn-glycerol 3-phosphate</name>
        <dbReference type="ChEBI" id="CHEBI:57597"/>
    </ligand>
</feature>
<feature type="binding site" evidence="1">
    <location>
        <position position="255"/>
    </location>
    <ligand>
        <name>NADPH</name>
        <dbReference type="ChEBI" id="CHEBI:57783"/>
    </ligand>
</feature>
<feature type="binding site" evidence="1">
    <location>
        <position position="255"/>
    </location>
    <ligand>
        <name>sn-glycerol 3-phosphate</name>
        <dbReference type="ChEBI" id="CHEBI:57597"/>
    </ligand>
</feature>
<feature type="binding site" evidence="1">
    <location>
        <position position="256"/>
    </location>
    <ligand>
        <name>sn-glycerol 3-phosphate</name>
        <dbReference type="ChEBI" id="CHEBI:57597"/>
    </ligand>
</feature>
<feature type="binding site" evidence="1">
    <location>
        <position position="279"/>
    </location>
    <ligand>
        <name>NADPH</name>
        <dbReference type="ChEBI" id="CHEBI:57783"/>
    </ligand>
</feature>
<feature type="binding site" evidence="1">
    <location>
        <position position="281"/>
    </location>
    <ligand>
        <name>NADPH</name>
        <dbReference type="ChEBI" id="CHEBI:57783"/>
    </ligand>
</feature>
<comment type="function">
    <text evidence="1">Catalyzes the reduction of the glycolytic intermediate dihydroxyacetone phosphate (DHAP) to sn-glycerol 3-phosphate (G3P), the key precursor for phospholipid synthesis.</text>
</comment>
<comment type="catalytic activity">
    <reaction evidence="1">
        <text>sn-glycerol 3-phosphate + NAD(+) = dihydroxyacetone phosphate + NADH + H(+)</text>
        <dbReference type="Rhea" id="RHEA:11092"/>
        <dbReference type="ChEBI" id="CHEBI:15378"/>
        <dbReference type="ChEBI" id="CHEBI:57540"/>
        <dbReference type="ChEBI" id="CHEBI:57597"/>
        <dbReference type="ChEBI" id="CHEBI:57642"/>
        <dbReference type="ChEBI" id="CHEBI:57945"/>
        <dbReference type="EC" id="1.1.1.94"/>
    </reaction>
    <physiologicalReaction direction="right-to-left" evidence="1">
        <dbReference type="Rhea" id="RHEA:11094"/>
    </physiologicalReaction>
</comment>
<comment type="catalytic activity">
    <reaction evidence="1">
        <text>sn-glycerol 3-phosphate + NADP(+) = dihydroxyacetone phosphate + NADPH + H(+)</text>
        <dbReference type="Rhea" id="RHEA:11096"/>
        <dbReference type="ChEBI" id="CHEBI:15378"/>
        <dbReference type="ChEBI" id="CHEBI:57597"/>
        <dbReference type="ChEBI" id="CHEBI:57642"/>
        <dbReference type="ChEBI" id="CHEBI:57783"/>
        <dbReference type="ChEBI" id="CHEBI:58349"/>
        <dbReference type="EC" id="1.1.1.94"/>
    </reaction>
    <physiologicalReaction direction="right-to-left" evidence="1">
        <dbReference type="Rhea" id="RHEA:11098"/>
    </physiologicalReaction>
</comment>
<comment type="pathway">
    <text evidence="1">Membrane lipid metabolism; glycerophospholipid metabolism.</text>
</comment>
<comment type="subcellular location">
    <subcellularLocation>
        <location evidence="1">Cytoplasm</location>
    </subcellularLocation>
</comment>
<comment type="similarity">
    <text evidence="1">Belongs to the NAD-dependent glycerol-3-phosphate dehydrogenase family.</text>
</comment>
<sequence>MRGSVIGSGSFGTALANVLAVNCEEVRLWGRESSVVEAINTQHENPTYLKGIPISERVRATNDLQEALVGSELVVLATPSHATREVVAKAQAYLPRHVPIVTVSKGIENGTLLTMTELLEDCLPEEFHPYLAVLSGPSFAKELARRMPTVVTIASHWDKVALRCQKALQTETFRSYTSTDVVGVQYGGALKNVIAIAAGMADGLGMGHNARAAIITRGLAEITRLAVRKGANPLTLSGLSGMGDLVLTCTGELSRNRHVGMELGKGRKLPDILADMKEVAEGVKTARSAHELELKTGVELPICHQVYLIAHEGKSARTAVVDLMTRQPKSELAGV</sequence>
<organism>
    <name type="scientific">Myxococcus xanthus (strain DK1622)</name>
    <dbReference type="NCBI Taxonomy" id="246197"/>
    <lineage>
        <taxon>Bacteria</taxon>
        <taxon>Pseudomonadati</taxon>
        <taxon>Myxococcota</taxon>
        <taxon>Myxococcia</taxon>
        <taxon>Myxococcales</taxon>
        <taxon>Cystobacterineae</taxon>
        <taxon>Myxococcaceae</taxon>
        <taxon>Myxococcus</taxon>
    </lineage>
</organism>
<keyword id="KW-0963">Cytoplasm</keyword>
<keyword id="KW-0444">Lipid biosynthesis</keyword>
<keyword id="KW-0443">Lipid metabolism</keyword>
<keyword id="KW-0520">NAD</keyword>
<keyword id="KW-0521">NADP</keyword>
<keyword id="KW-0547">Nucleotide-binding</keyword>
<keyword id="KW-0560">Oxidoreductase</keyword>
<keyword id="KW-0594">Phospholipid biosynthesis</keyword>
<keyword id="KW-1208">Phospholipid metabolism</keyword>
<keyword id="KW-1185">Reference proteome</keyword>
<dbReference type="EC" id="1.1.1.94" evidence="1"/>
<dbReference type="EMBL" id="CP000113">
    <property type="protein sequence ID" value="ABF87310.1"/>
    <property type="molecule type" value="Genomic_DNA"/>
</dbReference>
<dbReference type="RefSeq" id="WP_011551471.1">
    <property type="nucleotide sequence ID" value="NC_008095.1"/>
</dbReference>
<dbReference type="SMR" id="Q1DCL2"/>
<dbReference type="STRING" id="246197.MXAN_1354"/>
<dbReference type="EnsemblBacteria" id="ABF87310">
    <property type="protein sequence ID" value="ABF87310"/>
    <property type="gene ID" value="MXAN_1354"/>
</dbReference>
<dbReference type="GeneID" id="41358800"/>
<dbReference type="KEGG" id="mxa:MXAN_1354"/>
<dbReference type="eggNOG" id="COG0240">
    <property type="taxonomic scope" value="Bacteria"/>
</dbReference>
<dbReference type="HOGENOM" id="CLU_033449_0_2_7"/>
<dbReference type="OrthoDB" id="9812273at2"/>
<dbReference type="UniPathway" id="UPA00940"/>
<dbReference type="Proteomes" id="UP000002402">
    <property type="component" value="Chromosome"/>
</dbReference>
<dbReference type="GO" id="GO:0005829">
    <property type="term" value="C:cytosol"/>
    <property type="evidence" value="ECO:0007669"/>
    <property type="project" value="TreeGrafter"/>
</dbReference>
<dbReference type="GO" id="GO:0047952">
    <property type="term" value="F:glycerol-3-phosphate dehydrogenase [NAD(P)+] activity"/>
    <property type="evidence" value="ECO:0007669"/>
    <property type="project" value="UniProtKB-UniRule"/>
</dbReference>
<dbReference type="GO" id="GO:0051287">
    <property type="term" value="F:NAD binding"/>
    <property type="evidence" value="ECO:0007669"/>
    <property type="project" value="InterPro"/>
</dbReference>
<dbReference type="GO" id="GO:0005975">
    <property type="term" value="P:carbohydrate metabolic process"/>
    <property type="evidence" value="ECO:0007669"/>
    <property type="project" value="InterPro"/>
</dbReference>
<dbReference type="GO" id="GO:0046167">
    <property type="term" value="P:glycerol-3-phosphate biosynthetic process"/>
    <property type="evidence" value="ECO:0007669"/>
    <property type="project" value="UniProtKB-UniRule"/>
</dbReference>
<dbReference type="GO" id="GO:0046168">
    <property type="term" value="P:glycerol-3-phosphate catabolic process"/>
    <property type="evidence" value="ECO:0007669"/>
    <property type="project" value="InterPro"/>
</dbReference>
<dbReference type="GO" id="GO:0006650">
    <property type="term" value="P:glycerophospholipid metabolic process"/>
    <property type="evidence" value="ECO:0007669"/>
    <property type="project" value="UniProtKB-UniRule"/>
</dbReference>
<dbReference type="GO" id="GO:0008654">
    <property type="term" value="P:phospholipid biosynthetic process"/>
    <property type="evidence" value="ECO:0007669"/>
    <property type="project" value="UniProtKB-KW"/>
</dbReference>
<dbReference type="FunFam" id="1.10.1040.10:FF:000001">
    <property type="entry name" value="Glycerol-3-phosphate dehydrogenase [NAD(P)+]"/>
    <property type="match status" value="1"/>
</dbReference>
<dbReference type="FunFam" id="3.40.50.720:FF:000019">
    <property type="entry name" value="Glycerol-3-phosphate dehydrogenase [NAD(P)+]"/>
    <property type="match status" value="1"/>
</dbReference>
<dbReference type="Gene3D" id="1.10.1040.10">
    <property type="entry name" value="N-(1-d-carboxylethyl)-l-norvaline Dehydrogenase, domain 2"/>
    <property type="match status" value="1"/>
</dbReference>
<dbReference type="Gene3D" id="3.40.50.720">
    <property type="entry name" value="NAD(P)-binding Rossmann-like Domain"/>
    <property type="match status" value="1"/>
</dbReference>
<dbReference type="HAMAP" id="MF_00394">
    <property type="entry name" value="NAD_Glyc3P_dehydrog"/>
    <property type="match status" value="1"/>
</dbReference>
<dbReference type="InterPro" id="IPR008927">
    <property type="entry name" value="6-PGluconate_DH-like_C_sf"/>
</dbReference>
<dbReference type="InterPro" id="IPR013328">
    <property type="entry name" value="6PGD_dom2"/>
</dbReference>
<dbReference type="InterPro" id="IPR006168">
    <property type="entry name" value="G3P_DH_NAD-dep"/>
</dbReference>
<dbReference type="InterPro" id="IPR006109">
    <property type="entry name" value="G3P_DH_NAD-dep_C"/>
</dbReference>
<dbReference type="InterPro" id="IPR011128">
    <property type="entry name" value="G3P_DH_NAD-dep_N"/>
</dbReference>
<dbReference type="InterPro" id="IPR036291">
    <property type="entry name" value="NAD(P)-bd_dom_sf"/>
</dbReference>
<dbReference type="NCBIfam" id="NF000940">
    <property type="entry name" value="PRK00094.1-2"/>
    <property type="match status" value="1"/>
</dbReference>
<dbReference type="NCBIfam" id="NF000942">
    <property type="entry name" value="PRK00094.1-4"/>
    <property type="match status" value="1"/>
</dbReference>
<dbReference type="PANTHER" id="PTHR11728">
    <property type="entry name" value="GLYCEROL-3-PHOSPHATE DEHYDROGENASE"/>
    <property type="match status" value="1"/>
</dbReference>
<dbReference type="PANTHER" id="PTHR11728:SF1">
    <property type="entry name" value="GLYCEROL-3-PHOSPHATE DEHYDROGENASE [NAD(+)] 2, CHLOROPLASTIC"/>
    <property type="match status" value="1"/>
</dbReference>
<dbReference type="Pfam" id="PF07479">
    <property type="entry name" value="NAD_Gly3P_dh_C"/>
    <property type="match status" value="1"/>
</dbReference>
<dbReference type="Pfam" id="PF01210">
    <property type="entry name" value="NAD_Gly3P_dh_N"/>
    <property type="match status" value="1"/>
</dbReference>
<dbReference type="PIRSF" id="PIRSF000114">
    <property type="entry name" value="Glycerol-3-P_dh"/>
    <property type="match status" value="1"/>
</dbReference>
<dbReference type="PRINTS" id="PR00077">
    <property type="entry name" value="GPDHDRGNASE"/>
</dbReference>
<dbReference type="SUPFAM" id="SSF48179">
    <property type="entry name" value="6-phosphogluconate dehydrogenase C-terminal domain-like"/>
    <property type="match status" value="1"/>
</dbReference>
<dbReference type="SUPFAM" id="SSF51735">
    <property type="entry name" value="NAD(P)-binding Rossmann-fold domains"/>
    <property type="match status" value="1"/>
</dbReference>
<dbReference type="PROSITE" id="PS00957">
    <property type="entry name" value="NAD_G3PDH"/>
    <property type="match status" value="1"/>
</dbReference>
<proteinExistence type="inferred from homology"/>
<accession>Q1DCL2</accession>
<reference key="1">
    <citation type="journal article" date="2006" name="Proc. Natl. Acad. Sci. U.S.A.">
        <title>Evolution of sensory complexity recorded in a myxobacterial genome.</title>
        <authorList>
            <person name="Goldman B.S."/>
            <person name="Nierman W.C."/>
            <person name="Kaiser D."/>
            <person name="Slater S.C."/>
            <person name="Durkin A.S."/>
            <person name="Eisen J.A."/>
            <person name="Ronning C.M."/>
            <person name="Barbazuk W.B."/>
            <person name="Blanchard M."/>
            <person name="Field C."/>
            <person name="Halling C."/>
            <person name="Hinkle G."/>
            <person name="Iartchuk O."/>
            <person name="Kim H.S."/>
            <person name="Mackenzie C."/>
            <person name="Madupu R."/>
            <person name="Miller N."/>
            <person name="Shvartsbeyn A."/>
            <person name="Sullivan S.A."/>
            <person name="Vaudin M."/>
            <person name="Wiegand R."/>
            <person name="Kaplan H.B."/>
        </authorList>
    </citation>
    <scope>NUCLEOTIDE SEQUENCE [LARGE SCALE GENOMIC DNA]</scope>
    <source>
        <strain>DK1622</strain>
    </source>
</reference>